<sequence length="163" mass="18270">MSARPDQSRTAAPSATTSPVEIYCDGACSGNPGPGGYGAILRYNGHEKEIRGSEAHTTNNRMELTAAMEALRLLTRPCRITIVTDSQYLVKGMTEWIQGWQRRGWQNSKKEPVLNRDLWEELLKLSAHHDVSWQWIRGHAGHAENERCDSLARQAITEMRGAP</sequence>
<evidence type="ECO:0000255" key="1">
    <source>
        <dbReference type="HAMAP-Rule" id="MF_00042"/>
    </source>
</evidence>
<evidence type="ECO:0000255" key="2">
    <source>
        <dbReference type="PROSITE-ProRule" id="PRU00408"/>
    </source>
</evidence>
<organism>
    <name type="scientific">Pelobacter propionicus (strain DSM 2379 / NBRC 103807 / OttBd1)</name>
    <dbReference type="NCBI Taxonomy" id="338966"/>
    <lineage>
        <taxon>Bacteria</taxon>
        <taxon>Pseudomonadati</taxon>
        <taxon>Thermodesulfobacteriota</taxon>
        <taxon>Desulfuromonadia</taxon>
        <taxon>Desulfuromonadales</taxon>
        <taxon>Desulfuromonadaceae</taxon>
        <taxon>Pelobacter</taxon>
    </lineage>
</organism>
<protein>
    <recommendedName>
        <fullName evidence="1">Ribonuclease H</fullName>
        <shortName evidence="1">RNase H</shortName>
        <ecNumber evidence="1">3.1.26.4</ecNumber>
    </recommendedName>
</protein>
<feature type="chain" id="PRO_0000332644" description="Ribonuclease H">
    <location>
        <begin position="1"/>
        <end position="163"/>
    </location>
</feature>
<feature type="domain" description="RNase H type-1" evidence="2">
    <location>
        <begin position="16"/>
        <end position="157"/>
    </location>
</feature>
<feature type="binding site" evidence="1">
    <location>
        <position position="25"/>
    </location>
    <ligand>
        <name>Mg(2+)</name>
        <dbReference type="ChEBI" id="CHEBI:18420"/>
        <label>1</label>
    </ligand>
</feature>
<feature type="binding site" evidence="1">
    <location>
        <position position="25"/>
    </location>
    <ligand>
        <name>Mg(2+)</name>
        <dbReference type="ChEBI" id="CHEBI:18420"/>
        <label>2</label>
    </ligand>
</feature>
<feature type="binding site" evidence="1">
    <location>
        <position position="63"/>
    </location>
    <ligand>
        <name>Mg(2+)</name>
        <dbReference type="ChEBI" id="CHEBI:18420"/>
        <label>1</label>
    </ligand>
</feature>
<feature type="binding site" evidence="1">
    <location>
        <position position="85"/>
    </location>
    <ligand>
        <name>Mg(2+)</name>
        <dbReference type="ChEBI" id="CHEBI:18420"/>
        <label>1</label>
    </ligand>
</feature>
<feature type="binding site" evidence="1">
    <location>
        <position position="149"/>
    </location>
    <ligand>
        <name>Mg(2+)</name>
        <dbReference type="ChEBI" id="CHEBI:18420"/>
        <label>2</label>
    </ligand>
</feature>
<accession>A1AT66</accession>
<name>RNH_PELPD</name>
<dbReference type="EC" id="3.1.26.4" evidence="1"/>
<dbReference type="EMBL" id="CP000482">
    <property type="protein sequence ID" value="ABL00537.1"/>
    <property type="molecule type" value="Genomic_DNA"/>
</dbReference>
<dbReference type="RefSeq" id="WP_011736772.1">
    <property type="nucleotide sequence ID" value="NC_008609.1"/>
</dbReference>
<dbReference type="SMR" id="A1AT66"/>
<dbReference type="STRING" id="338966.Ppro_2939"/>
<dbReference type="KEGG" id="ppd:Ppro_2939"/>
<dbReference type="eggNOG" id="COG0328">
    <property type="taxonomic scope" value="Bacteria"/>
</dbReference>
<dbReference type="HOGENOM" id="CLU_030894_6_0_7"/>
<dbReference type="OrthoDB" id="7845843at2"/>
<dbReference type="Proteomes" id="UP000006732">
    <property type="component" value="Chromosome"/>
</dbReference>
<dbReference type="GO" id="GO:0005737">
    <property type="term" value="C:cytoplasm"/>
    <property type="evidence" value="ECO:0007669"/>
    <property type="project" value="UniProtKB-SubCell"/>
</dbReference>
<dbReference type="GO" id="GO:0000287">
    <property type="term" value="F:magnesium ion binding"/>
    <property type="evidence" value="ECO:0007669"/>
    <property type="project" value="UniProtKB-UniRule"/>
</dbReference>
<dbReference type="GO" id="GO:0003676">
    <property type="term" value="F:nucleic acid binding"/>
    <property type="evidence" value="ECO:0007669"/>
    <property type="project" value="InterPro"/>
</dbReference>
<dbReference type="GO" id="GO:0004523">
    <property type="term" value="F:RNA-DNA hybrid ribonuclease activity"/>
    <property type="evidence" value="ECO:0007669"/>
    <property type="project" value="UniProtKB-UniRule"/>
</dbReference>
<dbReference type="GO" id="GO:0043137">
    <property type="term" value="P:DNA replication, removal of RNA primer"/>
    <property type="evidence" value="ECO:0007669"/>
    <property type="project" value="TreeGrafter"/>
</dbReference>
<dbReference type="CDD" id="cd09278">
    <property type="entry name" value="RNase_HI_prokaryote_like"/>
    <property type="match status" value="1"/>
</dbReference>
<dbReference type="FunFam" id="3.30.420.10:FF:000089">
    <property type="entry name" value="Ribonuclease H"/>
    <property type="match status" value="1"/>
</dbReference>
<dbReference type="Gene3D" id="3.30.420.10">
    <property type="entry name" value="Ribonuclease H-like superfamily/Ribonuclease H"/>
    <property type="match status" value="1"/>
</dbReference>
<dbReference type="HAMAP" id="MF_00042">
    <property type="entry name" value="RNase_H"/>
    <property type="match status" value="1"/>
</dbReference>
<dbReference type="InterPro" id="IPR050092">
    <property type="entry name" value="RNase_H"/>
</dbReference>
<dbReference type="InterPro" id="IPR012337">
    <property type="entry name" value="RNaseH-like_sf"/>
</dbReference>
<dbReference type="InterPro" id="IPR002156">
    <property type="entry name" value="RNaseH_domain"/>
</dbReference>
<dbReference type="InterPro" id="IPR036397">
    <property type="entry name" value="RNaseH_sf"/>
</dbReference>
<dbReference type="InterPro" id="IPR022892">
    <property type="entry name" value="RNaseHI"/>
</dbReference>
<dbReference type="NCBIfam" id="NF001236">
    <property type="entry name" value="PRK00203.1"/>
    <property type="match status" value="1"/>
</dbReference>
<dbReference type="PANTHER" id="PTHR10642">
    <property type="entry name" value="RIBONUCLEASE H1"/>
    <property type="match status" value="1"/>
</dbReference>
<dbReference type="PANTHER" id="PTHR10642:SF26">
    <property type="entry name" value="RIBONUCLEASE H1"/>
    <property type="match status" value="1"/>
</dbReference>
<dbReference type="Pfam" id="PF00075">
    <property type="entry name" value="RNase_H"/>
    <property type="match status" value="1"/>
</dbReference>
<dbReference type="SUPFAM" id="SSF53098">
    <property type="entry name" value="Ribonuclease H-like"/>
    <property type="match status" value="1"/>
</dbReference>
<dbReference type="PROSITE" id="PS50879">
    <property type="entry name" value="RNASE_H_1"/>
    <property type="match status" value="1"/>
</dbReference>
<comment type="function">
    <text evidence="1">Endonuclease that specifically degrades the RNA of RNA-DNA hybrids.</text>
</comment>
<comment type="catalytic activity">
    <reaction evidence="1">
        <text>Endonucleolytic cleavage to 5'-phosphomonoester.</text>
        <dbReference type="EC" id="3.1.26.4"/>
    </reaction>
</comment>
<comment type="cofactor">
    <cofactor evidence="1">
        <name>Mg(2+)</name>
        <dbReference type="ChEBI" id="CHEBI:18420"/>
    </cofactor>
    <text evidence="1">Binds 1 Mg(2+) ion per subunit. May bind a second metal ion at a regulatory site, or after substrate binding.</text>
</comment>
<comment type="subunit">
    <text evidence="1">Monomer.</text>
</comment>
<comment type="subcellular location">
    <subcellularLocation>
        <location evidence="1">Cytoplasm</location>
    </subcellularLocation>
</comment>
<comment type="similarity">
    <text evidence="1">Belongs to the RNase H family.</text>
</comment>
<gene>
    <name evidence="1" type="primary">rnhA</name>
    <name type="ordered locus">Ppro_2939</name>
</gene>
<reference key="1">
    <citation type="submission" date="2006-10" db="EMBL/GenBank/DDBJ databases">
        <title>Complete sequence of chromosome of Pelobacter propionicus DSM 2379.</title>
        <authorList>
            <consortium name="US DOE Joint Genome Institute"/>
            <person name="Copeland A."/>
            <person name="Lucas S."/>
            <person name="Lapidus A."/>
            <person name="Barry K."/>
            <person name="Detter J.C."/>
            <person name="Glavina del Rio T."/>
            <person name="Hammon N."/>
            <person name="Israni S."/>
            <person name="Dalin E."/>
            <person name="Tice H."/>
            <person name="Pitluck S."/>
            <person name="Saunders E."/>
            <person name="Brettin T."/>
            <person name="Bruce D."/>
            <person name="Han C."/>
            <person name="Tapia R."/>
            <person name="Schmutz J."/>
            <person name="Larimer F."/>
            <person name="Land M."/>
            <person name="Hauser L."/>
            <person name="Kyrpides N."/>
            <person name="Kim E."/>
            <person name="Lovley D."/>
            <person name="Richardson P."/>
        </authorList>
    </citation>
    <scope>NUCLEOTIDE SEQUENCE [LARGE SCALE GENOMIC DNA]</scope>
    <source>
        <strain>DSM 2379 / NBRC 103807 / OttBd1</strain>
    </source>
</reference>
<proteinExistence type="inferred from homology"/>
<keyword id="KW-0963">Cytoplasm</keyword>
<keyword id="KW-0255">Endonuclease</keyword>
<keyword id="KW-0378">Hydrolase</keyword>
<keyword id="KW-0460">Magnesium</keyword>
<keyword id="KW-0479">Metal-binding</keyword>
<keyword id="KW-0540">Nuclease</keyword>
<keyword id="KW-1185">Reference proteome</keyword>